<dbReference type="EMBL" id="CP000056">
    <property type="protein sequence ID" value="AAX71669.1"/>
    <property type="molecule type" value="Genomic_DNA"/>
</dbReference>
<dbReference type="RefSeq" id="WP_002990420.1">
    <property type="nucleotide sequence ID" value="NC_007296.2"/>
</dbReference>
<dbReference type="SMR" id="Q48UD7"/>
<dbReference type="GeneID" id="69901118"/>
<dbReference type="KEGG" id="spb:M28_Spy0555"/>
<dbReference type="HOGENOM" id="CLU_079215_4_2_9"/>
<dbReference type="GO" id="GO:0005886">
    <property type="term" value="C:plasma membrane"/>
    <property type="evidence" value="ECO:0007669"/>
    <property type="project" value="UniProtKB-SubCell"/>
</dbReference>
<dbReference type="GO" id="GO:0045259">
    <property type="term" value="C:proton-transporting ATP synthase complex"/>
    <property type="evidence" value="ECO:0007669"/>
    <property type="project" value="UniProtKB-KW"/>
</dbReference>
<dbReference type="GO" id="GO:0046933">
    <property type="term" value="F:proton-transporting ATP synthase activity, rotational mechanism"/>
    <property type="evidence" value="ECO:0007669"/>
    <property type="project" value="UniProtKB-UniRule"/>
</dbReference>
<dbReference type="GO" id="GO:0046961">
    <property type="term" value="F:proton-transporting ATPase activity, rotational mechanism"/>
    <property type="evidence" value="ECO:0007669"/>
    <property type="project" value="TreeGrafter"/>
</dbReference>
<dbReference type="CDD" id="cd06503">
    <property type="entry name" value="ATP-synt_Fo_b"/>
    <property type="match status" value="1"/>
</dbReference>
<dbReference type="HAMAP" id="MF_01398">
    <property type="entry name" value="ATP_synth_b_bprime"/>
    <property type="match status" value="1"/>
</dbReference>
<dbReference type="InterPro" id="IPR028987">
    <property type="entry name" value="ATP_synth_B-like_membr_sf"/>
</dbReference>
<dbReference type="InterPro" id="IPR002146">
    <property type="entry name" value="ATP_synth_b/b'su_bac/chlpt"/>
</dbReference>
<dbReference type="InterPro" id="IPR005864">
    <property type="entry name" value="ATP_synth_F0_bsu_bac"/>
</dbReference>
<dbReference type="InterPro" id="IPR050059">
    <property type="entry name" value="ATP_synthase_B_chain"/>
</dbReference>
<dbReference type="NCBIfam" id="TIGR01144">
    <property type="entry name" value="ATP_synt_b"/>
    <property type="match status" value="1"/>
</dbReference>
<dbReference type="PANTHER" id="PTHR33445:SF1">
    <property type="entry name" value="ATP SYNTHASE SUBUNIT B"/>
    <property type="match status" value="1"/>
</dbReference>
<dbReference type="PANTHER" id="PTHR33445">
    <property type="entry name" value="ATP SYNTHASE SUBUNIT B', CHLOROPLASTIC"/>
    <property type="match status" value="1"/>
</dbReference>
<dbReference type="Pfam" id="PF00430">
    <property type="entry name" value="ATP-synt_B"/>
    <property type="match status" value="1"/>
</dbReference>
<dbReference type="SUPFAM" id="SSF81573">
    <property type="entry name" value="F1F0 ATP synthase subunit B, membrane domain"/>
    <property type="match status" value="1"/>
</dbReference>
<keyword id="KW-0066">ATP synthesis</keyword>
<keyword id="KW-1003">Cell membrane</keyword>
<keyword id="KW-0138">CF(0)</keyword>
<keyword id="KW-0375">Hydrogen ion transport</keyword>
<keyword id="KW-0406">Ion transport</keyword>
<keyword id="KW-0472">Membrane</keyword>
<keyword id="KW-0812">Transmembrane</keyword>
<keyword id="KW-1133">Transmembrane helix</keyword>
<keyword id="KW-0813">Transport</keyword>
<accession>Q48UD7</accession>
<gene>
    <name evidence="1" type="primary">atpF</name>
    <name type="ordered locus">M28_Spy0555</name>
</gene>
<evidence type="ECO:0000255" key="1">
    <source>
        <dbReference type="HAMAP-Rule" id="MF_01398"/>
    </source>
</evidence>
<comment type="function">
    <text evidence="1">F(1)F(0) ATP synthase produces ATP from ADP in the presence of a proton or sodium gradient. F-type ATPases consist of two structural domains, F(1) containing the extramembraneous catalytic core and F(0) containing the membrane proton channel, linked together by a central stalk and a peripheral stalk. During catalysis, ATP synthesis in the catalytic domain of F(1) is coupled via a rotary mechanism of the central stalk subunits to proton translocation.</text>
</comment>
<comment type="function">
    <text evidence="1">Component of the F(0) channel, it forms part of the peripheral stalk, linking F(1) to F(0).</text>
</comment>
<comment type="subunit">
    <text evidence="1">F-type ATPases have 2 components, F(1) - the catalytic core - and F(0) - the membrane proton channel. F(1) has five subunits: alpha(3), beta(3), gamma(1), delta(1), epsilon(1). F(0) has three main subunits: a(1), b(2) and c(10-14). The alpha and beta chains form an alternating ring which encloses part of the gamma chain. F(1) is attached to F(0) by a central stalk formed by the gamma and epsilon chains, while a peripheral stalk is formed by the delta and b chains.</text>
</comment>
<comment type="subcellular location">
    <subcellularLocation>
        <location evidence="1">Cell membrane</location>
        <topology evidence="1">Single-pass membrane protein</topology>
    </subcellularLocation>
</comment>
<comment type="similarity">
    <text evidence="1">Belongs to the ATPase B chain family.</text>
</comment>
<sequence length="164" mass="17782">MSITFGELVGNFILVTGSVIVLLLLIKKFAWGAIESILQTRSQQISRDIDQAEQSRLSAQQLEAKSQANLDASRSQASKIISDAKEIGQLQGDKLVAEATDEAKRLKEKALTDIEQSKSDAISAVKTEMSDLTVLLAEKIMGANLDKTAQSQLIDSYLDDLGEA</sequence>
<feature type="chain" id="PRO_0000368806" description="ATP synthase subunit b">
    <location>
        <begin position="1"/>
        <end position="164"/>
    </location>
</feature>
<feature type="transmembrane region" description="Helical" evidence="1">
    <location>
        <begin position="6"/>
        <end position="26"/>
    </location>
</feature>
<organism>
    <name type="scientific">Streptococcus pyogenes serotype M28 (strain MGAS6180)</name>
    <dbReference type="NCBI Taxonomy" id="319701"/>
    <lineage>
        <taxon>Bacteria</taxon>
        <taxon>Bacillati</taxon>
        <taxon>Bacillota</taxon>
        <taxon>Bacilli</taxon>
        <taxon>Lactobacillales</taxon>
        <taxon>Streptococcaceae</taxon>
        <taxon>Streptococcus</taxon>
    </lineage>
</organism>
<proteinExistence type="inferred from homology"/>
<reference key="1">
    <citation type="journal article" date="2005" name="J. Infect. Dis.">
        <title>Genome sequence of a serotype M28 strain of group A Streptococcus: potential new insights into puerperal sepsis and bacterial disease specificity.</title>
        <authorList>
            <person name="Green N.M."/>
            <person name="Zhang S."/>
            <person name="Porcella S.F."/>
            <person name="Nagiec M.J."/>
            <person name="Barbian K.D."/>
            <person name="Beres S.B."/>
            <person name="Lefebvre R.B."/>
            <person name="Musser J.M."/>
        </authorList>
    </citation>
    <scope>NUCLEOTIDE SEQUENCE [LARGE SCALE GENOMIC DNA]</scope>
    <source>
        <strain>MGAS6180</strain>
    </source>
</reference>
<protein>
    <recommendedName>
        <fullName evidence="1">ATP synthase subunit b</fullName>
    </recommendedName>
    <alternativeName>
        <fullName evidence="1">ATP synthase F(0) sector subunit b</fullName>
    </alternativeName>
    <alternativeName>
        <fullName evidence="1">ATPase subunit I</fullName>
    </alternativeName>
    <alternativeName>
        <fullName evidence="1">F-type ATPase subunit b</fullName>
        <shortName evidence="1">F-ATPase subunit b</shortName>
    </alternativeName>
</protein>
<name>ATPF_STRPM</name>